<evidence type="ECO:0000250" key="1"/>
<evidence type="ECO:0000250" key="2">
    <source>
        <dbReference type="UniProtKB" id="Q6B4T5"/>
    </source>
</evidence>
<evidence type="ECO:0000303" key="3">
    <source ref="1"/>
</evidence>
<evidence type="ECO:0000305" key="4"/>
<name>TX4_LOXIN</name>
<proteinExistence type="evidence at transcript level"/>
<sequence length="81" mass="9363">ARGDAEKWESLISEERACKGEGVKGCYDKPDDWCCKKTPCKCPAWSHERECRCTQPCARRCRGKRALMLDPETHRLLFSED</sequence>
<comment type="function">
    <text evidence="2">Toxin active against insects (S.frugiperda larvae). May act on sodium (Nav) or calcium (Cav) channels.</text>
</comment>
<comment type="subcellular location">
    <subcellularLocation>
        <location evidence="2">Secreted</location>
    </subcellularLocation>
</comment>
<comment type="tissue specificity">
    <text evidence="4">Expressed by the venom gland.</text>
</comment>
<comment type="domain">
    <text evidence="1">The presence of a 'disulfide through disulfide knot' structurally defines this protein as a knottin.</text>
</comment>
<comment type="similarity">
    <text evidence="4">Belongs to the neurotoxin 28 (Litx) family.</text>
</comment>
<keyword id="KW-0027">Amidation</keyword>
<keyword id="KW-0108">Calcium channel impairing toxin</keyword>
<keyword id="KW-0165">Cleavage on pair of basic residues</keyword>
<keyword id="KW-1015">Disulfide bond</keyword>
<keyword id="KW-0872">Ion channel impairing toxin</keyword>
<keyword id="KW-0960">Knottin</keyword>
<keyword id="KW-0528">Neurotoxin</keyword>
<keyword id="KW-0964">Secreted</keyword>
<keyword id="KW-0800">Toxin</keyword>
<keyword id="KW-1218">Voltage-gated calcium channel impairing toxin</keyword>
<keyword id="KW-0738">Voltage-gated sodium channel impairing toxin</keyword>
<reference key="1">
    <citation type="submission" date="2006-02" db="EMBL/GenBank/DDBJ databases">
        <title>Molecular cloning and systematic screening of cDNA encoding for three toxins from Loxosceles intermedia venom gland.</title>
        <authorList>
            <person name="de Moura J.F."/>
            <person name="Kalapothakis E."/>
            <person name="Chavez-Olortegui C."/>
        </authorList>
    </citation>
    <scope>NUCLEOTIDE SEQUENCE [MRNA]</scope>
    <source>
        <tissue>Venom gland</tissue>
    </source>
</reference>
<dbReference type="EMBL" id="DQ388598">
    <property type="protein sequence ID" value="ABD48090.1"/>
    <property type="molecule type" value="mRNA"/>
</dbReference>
<dbReference type="ArachnoServer" id="AS000283">
    <property type="toxin name" value="U1-sicaritoxin-Li1c"/>
</dbReference>
<dbReference type="GO" id="GO:0005576">
    <property type="term" value="C:extracellular region"/>
    <property type="evidence" value="ECO:0007669"/>
    <property type="project" value="UniProtKB-SubCell"/>
</dbReference>
<dbReference type="GO" id="GO:0005246">
    <property type="term" value="F:calcium channel regulator activity"/>
    <property type="evidence" value="ECO:0007669"/>
    <property type="project" value="UniProtKB-KW"/>
</dbReference>
<dbReference type="GO" id="GO:0017080">
    <property type="term" value="F:sodium channel regulator activity"/>
    <property type="evidence" value="ECO:0007669"/>
    <property type="project" value="UniProtKB-KW"/>
</dbReference>
<dbReference type="GO" id="GO:0090729">
    <property type="term" value="F:toxin activity"/>
    <property type="evidence" value="ECO:0007669"/>
    <property type="project" value="UniProtKB-KW"/>
</dbReference>
<accession>Q27Q53</accession>
<protein>
    <recommendedName>
        <fullName>U1-sicaritoxin-Li1c</fullName>
        <shortName>U1-SCRTX-Li1c</shortName>
    </recommendedName>
    <alternativeName>
        <fullName evidence="3">LiTx4</fullName>
    </alternativeName>
</protein>
<feature type="propeptide" id="PRO_0000262663">
    <location>
        <begin position="1" status="less than"/>
        <end position="16"/>
    </location>
</feature>
<feature type="chain" id="PRO_0000262664" description="U1-sicaritoxin-Li1c">
    <location>
        <begin position="17"/>
        <end position="62"/>
    </location>
</feature>
<feature type="propeptide" id="PRO_0000262665" evidence="1">
    <location>
        <begin position="66"/>
        <end position="81"/>
    </location>
</feature>
<feature type="modified residue" description="Arginine amide" evidence="1">
    <location>
        <position position="62"/>
    </location>
</feature>
<feature type="disulfide bond" evidence="1">
    <location>
        <begin position="18"/>
        <end position="35"/>
    </location>
</feature>
<feature type="disulfide bond" evidence="1">
    <location>
        <begin position="26"/>
        <end position="40"/>
    </location>
</feature>
<feature type="disulfide bond" evidence="1">
    <location>
        <begin position="34"/>
        <end position="53"/>
    </location>
</feature>
<feature type="disulfide bond" evidence="1">
    <location>
        <begin position="42"/>
        <end position="51"/>
    </location>
</feature>
<feature type="non-terminal residue">
    <location>
        <position position="1"/>
    </location>
</feature>
<organism>
    <name type="scientific">Loxosceles intermedia</name>
    <name type="common">Brown spider</name>
    <dbReference type="NCBI Taxonomy" id="58218"/>
    <lineage>
        <taxon>Eukaryota</taxon>
        <taxon>Metazoa</taxon>
        <taxon>Ecdysozoa</taxon>
        <taxon>Arthropoda</taxon>
        <taxon>Chelicerata</taxon>
        <taxon>Arachnida</taxon>
        <taxon>Araneae</taxon>
        <taxon>Araneomorphae</taxon>
        <taxon>Haplogynae</taxon>
        <taxon>Scytodoidea</taxon>
        <taxon>Sicariidae</taxon>
        <taxon>Loxosceles</taxon>
    </lineage>
</organism>